<organism>
    <name type="scientific">Escherichia coli (strain K12 / MC4100 / BW2952)</name>
    <dbReference type="NCBI Taxonomy" id="595496"/>
    <lineage>
        <taxon>Bacteria</taxon>
        <taxon>Pseudomonadati</taxon>
        <taxon>Pseudomonadota</taxon>
        <taxon>Gammaproteobacteria</taxon>
        <taxon>Enterobacterales</taxon>
        <taxon>Enterobacteriaceae</taxon>
        <taxon>Escherichia</taxon>
    </lineage>
</organism>
<protein>
    <recommendedName>
        <fullName evidence="1">3-aminoacrylate deaminase RutC</fullName>
        <shortName evidence="1">3-AA deaminase</shortName>
        <ecNumber evidence="1">3.5.-.-</ecNumber>
    </recommendedName>
</protein>
<sequence>MPKSVIIPAGSSAPLAPFVPGTLADGVVYVSGTLAFDQHNNVLFADDPKAQTRHVLETIRKVIETAGGTMADVTFNSIFITDWKNYAAINEIYAEFFPGDKPARFCIQCGLVKPDALVEIATIAHIAK</sequence>
<accession>C4ZQD8</accession>
<comment type="function">
    <text evidence="1">Involved in pyrimidine catabolism. Catalyzes the deamination of 3-aminoacrylate to malonic semialdehyde, a reaction that can also occur spontaneously. RutC may facilitate the reaction and modulate the metabolic fitness, rather than catalyzing essential functions.</text>
</comment>
<comment type="catalytic activity">
    <reaction evidence="1">
        <text>(Z)-3-aminoacrylate + H2O + H(+) = 3-oxopropanoate + NH4(+)</text>
        <dbReference type="Rhea" id="RHEA:34947"/>
        <dbReference type="ChEBI" id="CHEBI:15377"/>
        <dbReference type="ChEBI" id="CHEBI:15378"/>
        <dbReference type="ChEBI" id="CHEBI:28938"/>
        <dbReference type="ChEBI" id="CHEBI:33190"/>
        <dbReference type="ChEBI" id="CHEBI:59894"/>
    </reaction>
</comment>
<comment type="subunit">
    <text evidence="1">Homotrimer.</text>
</comment>
<comment type="similarity">
    <text evidence="1">Belongs to the RutC family.</text>
</comment>
<evidence type="ECO:0000255" key="1">
    <source>
        <dbReference type="HAMAP-Rule" id="MF_00831"/>
    </source>
</evidence>
<dbReference type="EC" id="3.5.-.-" evidence="1"/>
<dbReference type="EMBL" id="CP001396">
    <property type="protein sequence ID" value="ACR62294.1"/>
    <property type="molecule type" value="Genomic_DNA"/>
</dbReference>
<dbReference type="RefSeq" id="WP_001126780.1">
    <property type="nucleotide sequence ID" value="NC_012759.1"/>
</dbReference>
<dbReference type="SMR" id="C4ZQD8"/>
<dbReference type="GeneID" id="75171086"/>
<dbReference type="KEGG" id="ebw:BWG_0864"/>
<dbReference type="HOGENOM" id="CLU_100715_7_3_6"/>
<dbReference type="GO" id="GO:0005829">
    <property type="term" value="C:cytosol"/>
    <property type="evidence" value="ECO:0007669"/>
    <property type="project" value="TreeGrafter"/>
</dbReference>
<dbReference type="GO" id="GO:0019239">
    <property type="term" value="F:deaminase activity"/>
    <property type="evidence" value="ECO:0007669"/>
    <property type="project" value="TreeGrafter"/>
</dbReference>
<dbReference type="GO" id="GO:0019740">
    <property type="term" value="P:nitrogen utilization"/>
    <property type="evidence" value="ECO:0007669"/>
    <property type="project" value="UniProtKB-UniRule"/>
</dbReference>
<dbReference type="GO" id="GO:0006212">
    <property type="term" value="P:uracil catabolic process"/>
    <property type="evidence" value="ECO:0007669"/>
    <property type="project" value="UniProtKB-UniRule"/>
</dbReference>
<dbReference type="CDD" id="cd00448">
    <property type="entry name" value="YjgF_YER057c_UK114_family"/>
    <property type="match status" value="1"/>
</dbReference>
<dbReference type="FunFam" id="3.30.1330.40:FF:000003">
    <property type="entry name" value="Putative aminoacrylate peracid reductase RutC"/>
    <property type="match status" value="1"/>
</dbReference>
<dbReference type="Gene3D" id="3.30.1330.40">
    <property type="entry name" value="RutC-like"/>
    <property type="match status" value="1"/>
</dbReference>
<dbReference type="HAMAP" id="MF_00831">
    <property type="entry name" value="RutC"/>
    <property type="match status" value="1"/>
</dbReference>
<dbReference type="InterPro" id="IPR019897">
    <property type="entry name" value="RidA_CS"/>
</dbReference>
<dbReference type="InterPro" id="IPR019898">
    <property type="entry name" value="RutC"/>
</dbReference>
<dbReference type="InterPro" id="IPR035959">
    <property type="entry name" value="RutC-like_sf"/>
</dbReference>
<dbReference type="InterPro" id="IPR006175">
    <property type="entry name" value="YjgF/YER057c/UK114"/>
</dbReference>
<dbReference type="NCBIfam" id="TIGR03610">
    <property type="entry name" value="RutC"/>
    <property type="match status" value="1"/>
</dbReference>
<dbReference type="PANTHER" id="PTHR11803">
    <property type="entry name" value="2-IMINOBUTANOATE/2-IMINOPROPANOATE DEAMINASE RIDA"/>
    <property type="match status" value="1"/>
</dbReference>
<dbReference type="PANTHER" id="PTHR11803:SF58">
    <property type="entry name" value="PROTEIN HMF1-RELATED"/>
    <property type="match status" value="1"/>
</dbReference>
<dbReference type="Pfam" id="PF01042">
    <property type="entry name" value="Ribonuc_L-PSP"/>
    <property type="match status" value="1"/>
</dbReference>
<dbReference type="SUPFAM" id="SSF55298">
    <property type="entry name" value="YjgF-like"/>
    <property type="match status" value="1"/>
</dbReference>
<dbReference type="PROSITE" id="PS01094">
    <property type="entry name" value="UPF0076"/>
    <property type="match status" value="1"/>
</dbReference>
<reference key="1">
    <citation type="journal article" date="2009" name="J. Bacteriol.">
        <title>Genomic sequencing reveals regulatory mutations and recombinational events in the widely used MC4100 lineage of Escherichia coli K-12.</title>
        <authorList>
            <person name="Ferenci T."/>
            <person name="Zhou Z."/>
            <person name="Betteridge T."/>
            <person name="Ren Y."/>
            <person name="Liu Y."/>
            <person name="Feng L."/>
            <person name="Reeves P.R."/>
            <person name="Wang L."/>
        </authorList>
    </citation>
    <scope>NUCLEOTIDE SEQUENCE [LARGE SCALE GENOMIC DNA]</scope>
    <source>
        <strain>K12 / MC4100 / BW2952</strain>
    </source>
</reference>
<feature type="chain" id="PRO_0000402728" description="3-aminoacrylate deaminase RutC">
    <location>
        <begin position="1"/>
        <end position="128"/>
    </location>
</feature>
<name>RUTC_ECOBW</name>
<proteinExistence type="inferred from homology"/>
<gene>
    <name evidence="1" type="primary">rutC</name>
    <name type="ordered locus">BWG_0864</name>
</gene>
<keyword id="KW-0378">Hydrolase</keyword>